<name>TYSY_LACPL</name>
<evidence type="ECO:0000255" key="1">
    <source>
        <dbReference type="HAMAP-Rule" id="MF_00008"/>
    </source>
</evidence>
<sequence>MLEDSYLQLARTILEHGTYKDDRTGTGTYSVFGYQMRFDLSQGFPLLTTKKVPFGLIKSELLWFLHGDTNIQYLLQHHNHIWDEWAFKNWVTSADYDGPDMTNFEHRRLDDPDFAPIYQAQMQTFDDQILTDDAFAAKYGNLGDVYGAQWRHWQTRQGKTIDQIANVIEMIKTHPDSRRLIVSAWNPEDVPNMALPPCHTLFQFYVADGKLSCQLYQRSGDVFLGVPFNIASYALLTHLIAKETGLAVGEFVHTLGDAHIYTNHVEQVKTQLTRQPRPAPQLTLSGAHDSIFDYQMSDIKLSGYDPAPAIKAPVAI</sequence>
<dbReference type="EC" id="2.1.1.45" evidence="1"/>
<dbReference type="EMBL" id="AL935263">
    <property type="protein sequence ID" value="CCC79139.1"/>
    <property type="molecule type" value="Genomic_DNA"/>
</dbReference>
<dbReference type="RefSeq" id="WP_003640579.1">
    <property type="nucleotide sequence ID" value="NC_004567.2"/>
</dbReference>
<dbReference type="RefSeq" id="YP_004889653.1">
    <property type="nucleotide sequence ID" value="NC_004567.2"/>
</dbReference>
<dbReference type="SMR" id="Q88W05"/>
<dbReference type="STRING" id="220668.lp_1870"/>
<dbReference type="EnsemblBacteria" id="CCC79139">
    <property type="protein sequence ID" value="CCC79139"/>
    <property type="gene ID" value="lp_1870"/>
</dbReference>
<dbReference type="KEGG" id="lpl:lp_1870"/>
<dbReference type="PATRIC" id="fig|220668.9.peg.1576"/>
<dbReference type="eggNOG" id="COG0207">
    <property type="taxonomic scope" value="Bacteria"/>
</dbReference>
<dbReference type="HOGENOM" id="CLU_021669_0_2_9"/>
<dbReference type="OrthoDB" id="9774633at2"/>
<dbReference type="PhylomeDB" id="Q88W05"/>
<dbReference type="UniPathway" id="UPA00575"/>
<dbReference type="Proteomes" id="UP000000432">
    <property type="component" value="Chromosome"/>
</dbReference>
<dbReference type="GO" id="GO:0005829">
    <property type="term" value="C:cytosol"/>
    <property type="evidence" value="ECO:0007669"/>
    <property type="project" value="TreeGrafter"/>
</dbReference>
<dbReference type="GO" id="GO:0004799">
    <property type="term" value="F:thymidylate synthase activity"/>
    <property type="evidence" value="ECO:0007669"/>
    <property type="project" value="UniProtKB-UniRule"/>
</dbReference>
<dbReference type="GO" id="GO:0006231">
    <property type="term" value="P:dTMP biosynthetic process"/>
    <property type="evidence" value="ECO:0007669"/>
    <property type="project" value="UniProtKB-UniRule"/>
</dbReference>
<dbReference type="GO" id="GO:0006235">
    <property type="term" value="P:dTTP biosynthetic process"/>
    <property type="evidence" value="ECO:0007669"/>
    <property type="project" value="UniProtKB-UniRule"/>
</dbReference>
<dbReference type="GO" id="GO:0032259">
    <property type="term" value="P:methylation"/>
    <property type="evidence" value="ECO:0007669"/>
    <property type="project" value="UniProtKB-KW"/>
</dbReference>
<dbReference type="CDD" id="cd00351">
    <property type="entry name" value="TS_Pyrimidine_HMase"/>
    <property type="match status" value="1"/>
</dbReference>
<dbReference type="Gene3D" id="3.30.572.10">
    <property type="entry name" value="Thymidylate synthase/dCMP hydroxymethylase domain"/>
    <property type="match status" value="1"/>
</dbReference>
<dbReference type="HAMAP" id="MF_00008">
    <property type="entry name" value="Thymidy_synth_bact"/>
    <property type="match status" value="1"/>
</dbReference>
<dbReference type="InterPro" id="IPR045097">
    <property type="entry name" value="Thymidate_synth/dCMP_Mease"/>
</dbReference>
<dbReference type="InterPro" id="IPR023451">
    <property type="entry name" value="Thymidate_synth/dCMP_Mease_dom"/>
</dbReference>
<dbReference type="InterPro" id="IPR036926">
    <property type="entry name" value="Thymidate_synth/dCMP_Mease_sf"/>
</dbReference>
<dbReference type="InterPro" id="IPR000398">
    <property type="entry name" value="Thymidylate_synthase"/>
</dbReference>
<dbReference type="InterPro" id="IPR020940">
    <property type="entry name" value="Thymidylate_synthase_AS"/>
</dbReference>
<dbReference type="NCBIfam" id="NF002496">
    <property type="entry name" value="PRK01827.1-2"/>
    <property type="match status" value="1"/>
</dbReference>
<dbReference type="NCBIfam" id="TIGR03284">
    <property type="entry name" value="thym_sym"/>
    <property type="match status" value="1"/>
</dbReference>
<dbReference type="PANTHER" id="PTHR11548:SF9">
    <property type="entry name" value="THYMIDYLATE SYNTHASE"/>
    <property type="match status" value="1"/>
</dbReference>
<dbReference type="PANTHER" id="PTHR11548">
    <property type="entry name" value="THYMIDYLATE SYNTHASE 1"/>
    <property type="match status" value="1"/>
</dbReference>
<dbReference type="Pfam" id="PF00303">
    <property type="entry name" value="Thymidylat_synt"/>
    <property type="match status" value="1"/>
</dbReference>
<dbReference type="PRINTS" id="PR00108">
    <property type="entry name" value="THYMDSNTHASE"/>
</dbReference>
<dbReference type="SUPFAM" id="SSF55831">
    <property type="entry name" value="Thymidylate synthase/dCMP hydroxymethylase"/>
    <property type="match status" value="1"/>
</dbReference>
<dbReference type="PROSITE" id="PS00091">
    <property type="entry name" value="THYMIDYLATE_SYNTHASE"/>
    <property type="match status" value="1"/>
</dbReference>
<proteinExistence type="inferred from homology"/>
<protein>
    <recommendedName>
        <fullName evidence="1">Thymidylate synthase</fullName>
        <shortName evidence="1">TS</shortName>
        <shortName evidence="1">TSase</shortName>
        <ecNumber evidence="1">2.1.1.45</ecNumber>
    </recommendedName>
</protein>
<feature type="chain" id="PRO_0000140970" description="Thymidylate synthase">
    <location>
        <begin position="1"/>
        <end position="316"/>
    </location>
</feature>
<feature type="active site" description="Nucleophile" evidence="1">
    <location>
        <position position="198"/>
    </location>
</feature>
<feature type="binding site" description="in other chain" evidence="1">
    <location>
        <position position="23"/>
    </location>
    <ligand>
        <name>dUMP</name>
        <dbReference type="ChEBI" id="CHEBI:246422"/>
        <note>ligand shared between dimeric partners</note>
    </ligand>
</feature>
<feature type="binding site" evidence="1">
    <location>
        <begin position="178"/>
        <end position="179"/>
    </location>
    <ligand>
        <name>dUMP</name>
        <dbReference type="ChEBI" id="CHEBI:246422"/>
        <note>ligand shared between dimeric partners</note>
    </ligand>
</feature>
<feature type="binding site" description="in other chain" evidence="1">
    <location>
        <begin position="218"/>
        <end position="221"/>
    </location>
    <ligand>
        <name>dUMP</name>
        <dbReference type="ChEBI" id="CHEBI:246422"/>
        <note>ligand shared between dimeric partners</note>
    </ligand>
</feature>
<feature type="binding site" evidence="1">
    <location>
        <position position="221"/>
    </location>
    <ligand>
        <name>(6R)-5,10-methylene-5,6,7,8-tetrahydrofolate</name>
        <dbReference type="ChEBI" id="CHEBI:15636"/>
    </ligand>
</feature>
<feature type="binding site" description="in other chain" evidence="1">
    <location>
        <position position="229"/>
    </location>
    <ligand>
        <name>dUMP</name>
        <dbReference type="ChEBI" id="CHEBI:246422"/>
        <note>ligand shared between dimeric partners</note>
    </ligand>
</feature>
<feature type="binding site" description="in other chain" evidence="1">
    <location>
        <begin position="259"/>
        <end position="261"/>
    </location>
    <ligand>
        <name>dUMP</name>
        <dbReference type="ChEBI" id="CHEBI:246422"/>
        <note>ligand shared between dimeric partners</note>
    </ligand>
</feature>
<feature type="binding site" evidence="1">
    <location>
        <position position="315"/>
    </location>
    <ligand>
        <name>(6R)-5,10-methylene-5,6,7,8-tetrahydrofolate</name>
        <dbReference type="ChEBI" id="CHEBI:15636"/>
    </ligand>
</feature>
<keyword id="KW-0963">Cytoplasm</keyword>
<keyword id="KW-0489">Methyltransferase</keyword>
<keyword id="KW-0545">Nucleotide biosynthesis</keyword>
<keyword id="KW-1185">Reference proteome</keyword>
<keyword id="KW-0808">Transferase</keyword>
<reference key="1">
    <citation type="journal article" date="2003" name="Proc. Natl. Acad. Sci. U.S.A.">
        <title>Complete genome sequence of Lactobacillus plantarum WCFS1.</title>
        <authorList>
            <person name="Kleerebezem M."/>
            <person name="Boekhorst J."/>
            <person name="van Kranenburg R."/>
            <person name="Molenaar D."/>
            <person name="Kuipers O.P."/>
            <person name="Leer R."/>
            <person name="Tarchini R."/>
            <person name="Peters S.A."/>
            <person name="Sandbrink H.M."/>
            <person name="Fiers M.W.E.J."/>
            <person name="Stiekema W."/>
            <person name="Klein Lankhorst R.M."/>
            <person name="Bron P.A."/>
            <person name="Hoffer S.M."/>
            <person name="Nierop Groot M.N."/>
            <person name="Kerkhoven R."/>
            <person name="De Vries M."/>
            <person name="Ursing B."/>
            <person name="De Vos W.M."/>
            <person name="Siezen R.J."/>
        </authorList>
    </citation>
    <scope>NUCLEOTIDE SEQUENCE [LARGE SCALE GENOMIC DNA]</scope>
    <source>
        <strain>ATCC BAA-793 / NCIMB 8826 / WCFS1</strain>
    </source>
</reference>
<reference key="2">
    <citation type="journal article" date="2012" name="J. Bacteriol.">
        <title>Complete resequencing and reannotation of the Lactobacillus plantarum WCFS1 genome.</title>
        <authorList>
            <person name="Siezen R.J."/>
            <person name="Francke C."/>
            <person name="Renckens B."/>
            <person name="Boekhorst J."/>
            <person name="Wels M."/>
            <person name="Kleerebezem M."/>
            <person name="van Hijum S.A."/>
        </authorList>
    </citation>
    <scope>NUCLEOTIDE SEQUENCE [LARGE SCALE GENOMIC DNA]</scope>
    <scope>GENOME REANNOTATION</scope>
    <source>
        <strain>ATCC BAA-793 / NCIMB 8826 / WCFS1</strain>
    </source>
</reference>
<gene>
    <name evidence="1" type="primary">thyA</name>
    <name type="ordered locus">lp_1870</name>
</gene>
<comment type="function">
    <text evidence="1">Catalyzes the reductive methylation of 2'-deoxyuridine-5'-monophosphate (dUMP) to 2'-deoxythymidine-5'-monophosphate (dTMP) while utilizing 5,10-methylenetetrahydrofolate (mTHF) as the methyl donor and reductant in the reaction, yielding dihydrofolate (DHF) as a by-product. This enzymatic reaction provides an intracellular de novo source of dTMP, an essential precursor for DNA biosynthesis.</text>
</comment>
<comment type="catalytic activity">
    <reaction evidence="1">
        <text>dUMP + (6R)-5,10-methylene-5,6,7,8-tetrahydrofolate = 7,8-dihydrofolate + dTMP</text>
        <dbReference type="Rhea" id="RHEA:12104"/>
        <dbReference type="ChEBI" id="CHEBI:15636"/>
        <dbReference type="ChEBI" id="CHEBI:57451"/>
        <dbReference type="ChEBI" id="CHEBI:63528"/>
        <dbReference type="ChEBI" id="CHEBI:246422"/>
        <dbReference type="EC" id="2.1.1.45"/>
    </reaction>
</comment>
<comment type="pathway">
    <text evidence="1">Pyrimidine metabolism; dTTP biosynthesis.</text>
</comment>
<comment type="subunit">
    <text evidence="1">Homodimer.</text>
</comment>
<comment type="subcellular location">
    <subcellularLocation>
        <location evidence="1">Cytoplasm</location>
    </subcellularLocation>
</comment>
<comment type="similarity">
    <text evidence="1">Belongs to the thymidylate synthase family. Bacterial-type ThyA subfamily.</text>
</comment>
<accession>Q88W05</accession>
<accession>F9UPK0</accession>
<organism>
    <name type="scientific">Lactiplantibacillus plantarum (strain ATCC BAA-793 / NCIMB 8826 / WCFS1)</name>
    <name type="common">Lactobacillus plantarum</name>
    <dbReference type="NCBI Taxonomy" id="220668"/>
    <lineage>
        <taxon>Bacteria</taxon>
        <taxon>Bacillati</taxon>
        <taxon>Bacillota</taxon>
        <taxon>Bacilli</taxon>
        <taxon>Lactobacillales</taxon>
        <taxon>Lactobacillaceae</taxon>
        <taxon>Lactiplantibacillus</taxon>
    </lineage>
</organism>